<comment type="function">
    <text evidence="1">Endoribonuclease which preferentially cleaves ApU and ApG phosphodiester bonds. Hydrolyzes UpU bonds at a lower rate (By similarity). Regulates the activity of vacuolar (H+)-ATPase (V-ATPase) which is responsible for acidifying and maintaining the pH of intracellular compartments (By similarity). Required at an early stage of receptor-mediated endocytosis (By similarity).</text>
</comment>
<comment type="subunit">
    <text evidence="1 3">Interacts with the proton translocation complex V0 of the V-ATPase (PubMed:32764564). Interacts with ATP6AP1 (By similarity).</text>
</comment>
<comment type="subcellular location">
    <subcellularLocation>
        <location evidence="1">Endomembrane system</location>
        <topology evidence="2">Multi-pass membrane protein</topology>
    </subcellularLocation>
    <subcellularLocation>
        <location evidence="3">Cytoplasmic vesicle</location>
        <location evidence="3">Clathrin-coated vesicle membrane</location>
        <topology evidence="2">Multi-pass membrane protein</topology>
    </subcellularLocation>
</comment>
<comment type="tissue specificity">
    <text evidence="3">Expressed in brain (at protein level).</text>
</comment>
<comment type="similarity">
    <text evidence="5">Belongs to the RNase K family.</text>
</comment>
<name>RNK_BOVIN</name>
<keyword id="KW-0002">3D-structure</keyword>
<keyword id="KW-0968">Cytoplasmic vesicle</keyword>
<keyword id="KW-0254">Endocytosis</keyword>
<keyword id="KW-0255">Endonuclease</keyword>
<keyword id="KW-0375">Hydrogen ion transport</keyword>
<keyword id="KW-0378">Hydrolase</keyword>
<keyword id="KW-0406">Ion transport</keyword>
<keyword id="KW-0472">Membrane</keyword>
<keyword id="KW-0540">Nuclease</keyword>
<keyword id="KW-1185">Reference proteome</keyword>
<keyword id="KW-0812">Transmembrane</keyword>
<keyword id="KW-1133">Transmembrane helix</keyword>
<keyword id="KW-0813">Transport</keyword>
<accession>Q3ZC23</accession>
<reference key="1">
    <citation type="submission" date="2005-08" db="EMBL/GenBank/DDBJ databases">
        <authorList>
            <consortium name="NIH - Mammalian Gene Collection (MGC) project"/>
        </authorList>
    </citation>
    <scope>NUCLEOTIDE SEQUENCE [LARGE SCALE MRNA]</scope>
    <source>
        <strain>Crossbred X Angus</strain>
        <tissue>Ileum</tissue>
    </source>
</reference>
<reference evidence="6" key="2">
    <citation type="journal article" date="2020" name="Nat. Commun.">
        <title>Cryo-EM structures of intact V-ATPase from bovine brain.</title>
        <authorList>
            <person name="Wang R."/>
            <person name="Long T."/>
            <person name="Hassan A."/>
            <person name="Wang J."/>
            <person name="Sun Y."/>
            <person name="Xie X.S."/>
            <person name="Li X."/>
        </authorList>
    </citation>
    <scope>STRUCTURE BY ELECTRON MICROSCOPY (3.37 ANGSTROMS) IN COMPLEX WITH THE V-ATPASE</scope>
    <scope>SUBCELLULAR LOCATION</scope>
    <scope>IDENTIFICATION BY MASS SPECTROMETRY</scope>
    <scope>TISSUE SPECIFICITY</scope>
</reference>
<proteinExistence type="evidence at protein level"/>
<sequence>MASLLCCGPKLAACGIVLSAWGVIMLIMLGIFFNVHSAVLIEDVPFTEKDFENGPQNIYNLYEQVSYNCFIAASLYLLLGGFSFCQVRLNKRKEYMVR</sequence>
<organism>
    <name type="scientific">Bos taurus</name>
    <name type="common">Bovine</name>
    <dbReference type="NCBI Taxonomy" id="9913"/>
    <lineage>
        <taxon>Eukaryota</taxon>
        <taxon>Metazoa</taxon>
        <taxon>Chordata</taxon>
        <taxon>Craniata</taxon>
        <taxon>Vertebrata</taxon>
        <taxon>Euteleostomi</taxon>
        <taxon>Mammalia</taxon>
        <taxon>Eutheria</taxon>
        <taxon>Laurasiatheria</taxon>
        <taxon>Artiodactyla</taxon>
        <taxon>Ruminantia</taxon>
        <taxon>Pecora</taxon>
        <taxon>Bovidae</taxon>
        <taxon>Bovinae</taxon>
        <taxon>Bos</taxon>
    </lineage>
</organism>
<evidence type="ECO:0000250" key="1">
    <source>
        <dbReference type="UniProtKB" id="Q6P5S7"/>
    </source>
</evidence>
<evidence type="ECO:0000255" key="2"/>
<evidence type="ECO:0000269" key="3">
    <source>
    </source>
</evidence>
<evidence type="ECO:0000303" key="4">
    <source>
    </source>
</evidence>
<evidence type="ECO:0000305" key="5"/>
<evidence type="ECO:0007744" key="6">
    <source>
        <dbReference type="PDB" id="6XBW"/>
    </source>
</evidence>
<evidence type="ECO:0007829" key="7">
    <source>
        <dbReference type="PDB" id="6XBW"/>
    </source>
</evidence>
<protein>
    <recommendedName>
        <fullName>Ribonuclease kappa</fullName>
        <shortName>RNase K</shortName>
        <shortName>RNase kappa</shortName>
        <ecNumber evidence="1">3.1.-.-</ecNumber>
    </recommendedName>
    <alternativeName>
        <fullName evidence="4">V-type proton ATPase subunit f</fullName>
        <shortName evidence="4">V-ATPase subunit f</shortName>
    </alternativeName>
</protein>
<gene>
    <name type="primary">RNASEK</name>
</gene>
<feature type="chain" id="PRO_0000344220" description="Ribonuclease kappa">
    <location>
        <begin position="1"/>
        <end position="98"/>
    </location>
</feature>
<feature type="transmembrane region" description="Helical" evidence="2">
    <location>
        <begin position="13"/>
        <end position="33"/>
    </location>
</feature>
<feature type="transmembrane region" description="Helical" evidence="2">
    <location>
        <begin position="65"/>
        <end position="85"/>
    </location>
</feature>
<feature type="helix" evidence="7">
    <location>
        <begin position="18"/>
        <end position="35"/>
    </location>
</feature>
<feature type="helix" evidence="7">
    <location>
        <begin position="65"/>
        <end position="75"/>
    </location>
</feature>
<feature type="turn" evidence="7">
    <location>
        <begin position="76"/>
        <end position="80"/>
    </location>
</feature>
<feature type="helix" evidence="7">
    <location>
        <begin position="81"/>
        <end position="83"/>
    </location>
</feature>
<dbReference type="EC" id="3.1.-.-" evidence="1"/>
<dbReference type="EMBL" id="BC102969">
    <property type="protein sequence ID" value="AAI02970.1"/>
    <property type="molecule type" value="mRNA"/>
</dbReference>
<dbReference type="RefSeq" id="NP_001029601.1">
    <property type="nucleotide sequence ID" value="NM_001034429.3"/>
</dbReference>
<dbReference type="PDB" id="6XBW">
    <property type="method" value="EM"/>
    <property type="resolution" value="3.37 A"/>
    <property type="chains" value="f=1-98"/>
</dbReference>
<dbReference type="PDB" id="7KHR">
    <property type="method" value="EM"/>
    <property type="resolution" value="3.62 A"/>
    <property type="chains" value="f=1-98"/>
</dbReference>
<dbReference type="PDBsum" id="6XBW"/>
<dbReference type="PDBsum" id="7KHR"/>
<dbReference type="EMDB" id="EMD-22121"/>
<dbReference type="EMDB" id="EMD-22880"/>
<dbReference type="SMR" id="Q3ZC23"/>
<dbReference type="FunCoup" id="Q3ZC23">
    <property type="interactions" value="2203"/>
</dbReference>
<dbReference type="STRING" id="9913.ENSBTAP00000029239"/>
<dbReference type="PaxDb" id="9913-ENSBTAP00000029239"/>
<dbReference type="GeneID" id="512886"/>
<dbReference type="KEGG" id="bta:512886"/>
<dbReference type="CTD" id="440400"/>
<dbReference type="VEuPathDB" id="HostDB:ENSBTAG00000021932"/>
<dbReference type="eggNOG" id="ENOG502S351">
    <property type="taxonomic scope" value="Eukaryota"/>
</dbReference>
<dbReference type="HOGENOM" id="CLU_140554_1_0_1"/>
<dbReference type="InParanoid" id="Q3ZC23"/>
<dbReference type="OMA" id="SNNCFIA"/>
<dbReference type="OrthoDB" id="67317at2759"/>
<dbReference type="TreeFam" id="TF300182"/>
<dbReference type="Proteomes" id="UP000009136">
    <property type="component" value="Chromosome 19"/>
</dbReference>
<dbReference type="Bgee" id="ENSBTAG00000021932">
    <property type="expression patterns" value="Expressed in neurohypophysis and 105 other cell types or tissues"/>
</dbReference>
<dbReference type="GO" id="GO:0030665">
    <property type="term" value="C:clathrin-coated vesicle membrane"/>
    <property type="evidence" value="ECO:0007669"/>
    <property type="project" value="UniProtKB-SubCell"/>
</dbReference>
<dbReference type="GO" id="GO:0012505">
    <property type="term" value="C:endomembrane system"/>
    <property type="evidence" value="ECO:0007669"/>
    <property type="project" value="UniProtKB-SubCell"/>
</dbReference>
<dbReference type="GO" id="GO:0000220">
    <property type="term" value="C:vacuolar proton-transporting V-type ATPase, V0 domain"/>
    <property type="evidence" value="ECO:0000314"/>
    <property type="project" value="UniProtKB"/>
</dbReference>
<dbReference type="GO" id="GO:0004521">
    <property type="term" value="F:RNA endonuclease activity"/>
    <property type="evidence" value="ECO:0000250"/>
    <property type="project" value="UniProtKB"/>
</dbReference>
<dbReference type="GO" id="GO:0048388">
    <property type="term" value="P:endosomal lumen acidification"/>
    <property type="evidence" value="ECO:0000250"/>
    <property type="project" value="UniProtKB"/>
</dbReference>
<dbReference type="GO" id="GO:0045851">
    <property type="term" value="P:pH reduction"/>
    <property type="evidence" value="ECO:0000305"/>
    <property type="project" value="UniProtKB"/>
</dbReference>
<dbReference type="GO" id="GO:1902600">
    <property type="term" value="P:proton transmembrane transport"/>
    <property type="evidence" value="ECO:0000250"/>
    <property type="project" value="UniProtKB"/>
</dbReference>
<dbReference type="GO" id="GO:0006898">
    <property type="term" value="P:receptor-mediated endocytosis"/>
    <property type="evidence" value="ECO:0000250"/>
    <property type="project" value="UniProtKB"/>
</dbReference>
<dbReference type="GO" id="GO:0019065">
    <property type="term" value="P:receptor-mediated endocytosis of virus by host cell"/>
    <property type="evidence" value="ECO:0000250"/>
    <property type="project" value="UniProtKB"/>
</dbReference>
<dbReference type="InterPro" id="IPR056552">
    <property type="entry name" value="Ribonucl_Kappa"/>
</dbReference>
<dbReference type="InterPro" id="IPR026770">
    <property type="entry name" value="RNase_K"/>
</dbReference>
<dbReference type="PANTHER" id="PTHR31733">
    <property type="entry name" value="RIBONUCLEASE KAPPA"/>
    <property type="match status" value="1"/>
</dbReference>
<dbReference type="Pfam" id="PF23489">
    <property type="entry name" value="V-ATPase_su_f"/>
    <property type="match status" value="1"/>
</dbReference>